<protein>
    <recommendedName>
        <fullName evidence="1">Chorismate synthase</fullName>
        <shortName evidence="1">CS</shortName>
        <ecNumber evidence="1">4.2.3.5</ecNumber>
    </recommendedName>
    <alternativeName>
        <fullName evidence="1">5-enolpyruvylshikimate-3-phosphate phospholyase</fullName>
    </alternativeName>
</protein>
<comment type="function">
    <text evidence="1">Catalyzes the anti-1,4-elimination of the C-3 phosphate and the C-6 proR hydrogen from 5-enolpyruvylshikimate-3-phosphate (EPSP) to yield chorismate, which is the branch point compound that serves as the starting substrate for the three terminal pathways of aromatic amino acid biosynthesis. This reaction introduces a second double bond into the aromatic ring system.</text>
</comment>
<comment type="catalytic activity">
    <reaction evidence="1">
        <text>5-O-(1-carboxyvinyl)-3-phosphoshikimate = chorismate + phosphate</text>
        <dbReference type="Rhea" id="RHEA:21020"/>
        <dbReference type="ChEBI" id="CHEBI:29748"/>
        <dbReference type="ChEBI" id="CHEBI:43474"/>
        <dbReference type="ChEBI" id="CHEBI:57701"/>
        <dbReference type="EC" id="4.2.3.5"/>
    </reaction>
</comment>
<comment type="cofactor">
    <cofactor evidence="1">
        <name>FMNH2</name>
        <dbReference type="ChEBI" id="CHEBI:57618"/>
    </cofactor>
    <text evidence="1">Reduced FMN (FMNH(2)).</text>
</comment>
<comment type="pathway">
    <text evidence="1">Metabolic intermediate biosynthesis; chorismate biosynthesis; chorismate from D-erythrose 4-phosphate and phosphoenolpyruvate: step 7/7.</text>
</comment>
<comment type="subunit">
    <text evidence="1">Homotetramer.</text>
</comment>
<comment type="similarity">
    <text evidence="1">Belongs to the chorismate synthase family.</text>
</comment>
<proteinExistence type="inferred from homology"/>
<name>AROC_STRPJ</name>
<evidence type="ECO:0000255" key="1">
    <source>
        <dbReference type="HAMAP-Rule" id="MF_00300"/>
    </source>
</evidence>
<keyword id="KW-0028">Amino-acid biosynthesis</keyword>
<keyword id="KW-0057">Aromatic amino acid biosynthesis</keyword>
<keyword id="KW-0274">FAD</keyword>
<keyword id="KW-0285">Flavoprotein</keyword>
<keyword id="KW-0288">FMN</keyword>
<keyword id="KW-0456">Lyase</keyword>
<keyword id="KW-0521">NADP</keyword>
<accession>B8ZKM3</accession>
<feature type="chain" id="PRO_1000132790" description="Chorismate synthase">
    <location>
        <begin position="1"/>
        <end position="388"/>
    </location>
</feature>
<feature type="binding site" evidence="1">
    <location>
        <position position="39"/>
    </location>
    <ligand>
        <name>NADP(+)</name>
        <dbReference type="ChEBI" id="CHEBI:58349"/>
    </ligand>
</feature>
<feature type="binding site" evidence="1">
    <location>
        <position position="45"/>
    </location>
    <ligand>
        <name>NADP(+)</name>
        <dbReference type="ChEBI" id="CHEBI:58349"/>
    </ligand>
</feature>
<feature type="binding site" evidence="1">
    <location>
        <begin position="130"/>
        <end position="132"/>
    </location>
    <ligand>
        <name>FMN</name>
        <dbReference type="ChEBI" id="CHEBI:58210"/>
    </ligand>
</feature>
<feature type="binding site" evidence="1">
    <location>
        <begin position="251"/>
        <end position="252"/>
    </location>
    <ligand>
        <name>FMN</name>
        <dbReference type="ChEBI" id="CHEBI:58210"/>
    </ligand>
</feature>
<feature type="binding site" evidence="1">
    <location>
        <position position="296"/>
    </location>
    <ligand>
        <name>FMN</name>
        <dbReference type="ChEBI" id="CHEBI:58210"/>
    </ligand>
</feature>
<feature type="binding site" evidence="1">
    <location>
        <begin position="311"/>
        <end position="315"/>
    </location>
    <ligand>
        <name>FMN</name>
        <dbReference type="ChEBI" id="CHEBI:58210"/>
    </ligand>
</feature>
<feature type="binding site" evidence="1">
    <location>
        <position position="337"/>
    </location>
    <ligand>
        <name>FMN</name>
        <dbReference type="ChEBI" id="CHEBI:58210"/>
    </ligand>
</feature>
<reference key="1">
    <citation type="journal article" date="2009" name="J. Bacteriol.">
        <title>Role of conjugative elements in the evolution of the multidrug-resistant pandemic clone Streptococcus pneumoniae Spain23F ST81.</title>
        <authorList>
            <person name="Croucher N.J."/>
            <person name="Walker D."/>
            <person name="Romero P."/>
            <person name="Lennard N."/>
            <person name="Paterson G.K."/>
            <person name="Bason N.C."/>
            <person name="Mitchell A.M."/>
            <person name="Quail M.A."/>
            <person name="Andrew P.W."/>
            <person name="Parkhill J."/>
            <person name="Bentley S.D."/>
            <person name="Mitchell T.J."/>
        </authorList>
    </citation>
    <scope>NUCLEOTIDE SEQUENCE [LARGE SCALE GENOMIC DNA]</scope>
    <source>
        <strain>ATCC 700669 / Spain 23F-1</strain>
    </source>
</reference>
<sequence length="388" mass="42757">MRYLTAGESHGPRLTAIIEGIPAGLPLTAEDINGDLKRRQGGYGRGGRMKIESDQVVFTSGVRHGKTTGAPITMDVVNKDHQKWLDIMSAEDIEDRLKSKRKITHPRPGHADLVGGIKYRFDDLRNSLERSSARETTMRVAVGAVAKRLLAELDMEIANHVVVFGGKEIDVPENLTVAEIKQRAAQSEVSIVNQEREQEIKDYIDQIKRDGDTIGGVVETVVGGVPVGLGSYVQWDRKLDARLAQAVVSINAFKGVEFGLGFEAGYRKGSQVMDEILWSKEDGYTRRTNNLGGFEGGMTNGQPIVVRGVMKPIPTLYKPLMSVDIETHEPYKATVERSDPTALPAAGMVMEAVVATVLAQEILEKFSSDNLEELKEAVAKYRDYTKNY</sequence>
<organism>
    <name type="scientific">Streptococcus pneumoniae (strain ATCC 700669 / Spain 23F-1)</name>
    <dbReference type="NCBI Taxonomy" id="561276"/>
    <lineage>
        <taxon>Bacteria</taxon>
        <taxon>Bacillati</taxon>
        <taxon>Bacillota</taxon>
        <taxon>Bacilli</taxon>
        <taxon>Lactobacillales</taxon>
        <taxon>Streptococcaceae</taxon>
        <taxon>Streptococcus</taxon>
    </lineage>
</organism>
<gene>
    <name evidence="1" type="primary">aroC</name>
    <name type="ordered locus">SPN23F13400</name>
</gene>
<dbReference type="EC" id="4.2.3.5" evidence="1"/>
<dbReference type="EMBL" id="FM211187">
    <property type="protein sequence ID" value="CAR69140.1"/>
    <property type="molecule type" value="Genomic_DNA"/>
</dbReference>
<dbReference type="RefSeq" id="WP_001269887.1">
    <property type="nucleotide sequence ID" value="NC_011900.1"/>
</dbReference>
<dbReference type="SMR" id="B8ZKM3"/>
<dbReference type="KEGG" id="sne:SPN23F13400"/>
<dbReference type="HOGENOM" id="CLU_034547_2_0_9"/>
<dbReference type="UniPathway" id="UPA00053">
    <property type="reaction ID" value="UER00090"/>
</dbReference>
<dbReference type="GO" id="GO:0005829">
    <property type="term" value="C:cytosol"/>
    <property type="evidence" value="ECO:0007669"/>
    <property type="project" value="TreeGrafter"/>
</dbReference>
<dbReference type="GO" id="GO:0004107">
    <property type="term" value="F:chorismate synthase activity"/>
    <property type="evidence" value="ECO:0007669"/>
    <property type="project" value="UniProtKB-UniRule"/>
</dbReference>
<dbReference type="GO" id="GO:0010181">
    <property type="term" value="F:FMN binding"/>
    <property type="evidence" value="ECO:0007669"/>
    <property type="project" value="TreeGrafter"/>
</dbReference>
<dbReference type="GO" id="GO:0008652">
    <property type="term" value="P:amino acid biosynthetic process"/>
    <property type="evidence" value="ECO:0007669"/>
    <property type="project" value="UniProtKB-KW"/>
</dbReference>
<dbReference type="GO" id="GO:0009073">
    <property type="term" value="P:aromatic amino acid family biosynthetic process"/>
    <property type="evidence" value="ECO:0007669"/>
    <property type="project" value="UniProtKB-KW"/>
</dbReference>
<dbReference type="GO" id="GO:0009423">
    <property type="term" value="P:chorismate biosynthetic process"/>
    <property type="evidence" value="ECO:0007669"/>
    <property type="project" value="UniProtKB-UniRule"/>
</dbReference>
<dbReference type="CDD" id="cd07304">
    <property type="entry name" value="Chorismate_synthase"/>
    <property type="match status" value="1"/>
</dbReference>
<dbReference type="FunFam" id="3.60.150.10:FF:000002">
    <property type="entry name" value="Chorismate synthase"/>
    <property type="match status" value="1"/>
</dbReference>
<dbReference type="Gene3D" id="3.60.150.10">
    <property type="entry name" value="Chorismate synthase AroC"/>
    <property type="match status" value="1"/>
</dbReference>
<dbReference type="HAMAP" id="MF_00300">
    <property type="entry name" value="Chorismate_synth"/>
    <property type="match status" value="1"/>
</dbReference>
<dbReference type="InterPro" id="IPR000453">
    <property type="entry name" value="Chorismate_synth"/>
</dbReference>
<dbReference type="InterPro" id="IPR035904">
    <property type="entry name" value="Chorismate_synth_AroC_sf"/>
</dbReference>
<dbReference type="InterPro" id="IPR020541">
    <property type="entry name" value="Chorismate_synthase_CS"/>
</dbReference>
<dbReference type="NCBIfam" id="TIGR00033">
    <property type="entry name" value="aroC"/>
    <property type="match status" value="1"/>
</dbReference>
<dbReference type="NCBIfam" id="NF003793">
    <property type="entry name" value="PRK05382.1"/>
    <property type="match status" value="1"/>
</dbReference>
<dbReference type="PANTHER" id="PTHR21085">
    <property type="entry name" value="CHORISMATE SYNTHASE"/>
    <property type="match status" value="1"/>
</dbReference>
<dbReference type="PANTHER" id="PTHR21085:SF0">
    <property type="entry name" value="CHORISMATE SYNTHASE"/>
    <property type="match status" value="1"/>
</dbReference>
<dbReference type="Pfam" id="PF01264">
    <property type="entry name" value="Chorismate_synt"/>
    <property type="match status" value="1"/>
</dbReference>
<dbReference type="PIRSF" id="PIRSF001456">
    <property type="entry name" value="Chorismate_synth"/>
    <property type="match status" value="1"/>
</dbReference>
<dbReference type="SUPFAM" id="SSF103263">
    <property type="entry name" value="Chorismate synthase, AroC"/>
    <property type="match status" value="1"/>
</dbReference>
<dbReference type="PROSITE" id="PS00787">
    <property type="entry name" value="CHORISMATE_SYNTHASE_1"/>
    <property type="match status" value="1"/>
</dbReference>
<dbReference type="PROSITE" id="PS00788">
    <property type="entry name" value="CHORISMATE_SYNTHASE_2"/>
    <property type="match status" value="1"/>
</dbReference>
<dbReference type="PROSITE" id="PS00789">
    <property type="entry name" value="CHORISMATE_SYNTHASE_3"/>
    <property type="match status" value="1"/>
</dbReference>